<comment type="function">
    <text evidence="1">Component of the acetyl coenzyme A carboxylase (ACC) complex. Biotin carboxylase (BC) catalyzes the carboxylation of biotin on its carrier protein (BCCP) and then the CO(2) group is transferred by the transcarboxylase to acetyl-CoA to form malonyl-CoA.</text>
</comment>
<comment type="catalytic activity">
    <reaction evidence="1">
        <text>N(6)-carboxybiotinyl-L-lysyl-[protein] + acetyl-CoA = N(6)-biotinyl-L-lysyl-[protein] + malonyl-CoA</text>
        <dbReference type="Rhea" id="RHEA:54728"/>
        <dbReference type="Rhea" id="RHEA-COMP:10505"/>
        <dbReference type="Rhea" id="RHEA-COMP:10506"/>
        <dbReference type="ChEBI" id="CHEBI:57288"/>
        <dbReference type="ChEBI" id="CHEBI:57384"/>
        <dbReference type="ChEBI" id="CHEBI:83144"/>
        <dbReference type="ChEBI" id="CHEBI:83145"/>
        <dbReference type="EC" id="2.1.3.15"/>
    </reaction>
</comment>
<comment type="cofactor">
    <cofactor evidence="1">
        <name>Zn(2+)</name>
        <dbReference type="ChEBI" id="CHEBI:29105"/>
    </cofactor>
    <text evidence="1">Binds 1 zinc ion per subunit.</text>
</comment>
<comment type="pathway">
    <text evidence="1">Lipid metabolism; malonyl-CoA biosynthesis; malonyl-CoA from acetyl-CoA: step 1/1.</text>
</comment>
<comment type="subunit">
    <text evidence="1">Acetyl-CoA carboxylase is a heterohexamer composed of biotin carboxyl carrier protein (AccB), biotin carboxylase (AccC) and two subunits each of ACCase subunit alpha (AccA) and ACCase subunit beta (AccD).</text>
</comment>
<comment type="subcellular location">
    <subcellularLocation>
        <location evidence="1">Cytoplasm</location>
    </subcellularLocation>
</comment>
<comment type="similarity">
    <text evidence="1">Belongs to the AccD/PCCB family.</text>
</comment>
<dbReference type="EC" id="2.1.3.15" evidence="1"/>
<dbReference type="EMBL" id="CP000744">
    <property type="protein sequence ID" value="ABR86606.1"/>
    <property type="molecule type" value="Genomic_DNA"/>
</dbReference>
<dbReference type="RefSeq" id="WP_012075059.1">
    <property type="nucleotide sequence ID" value="NC_009656.1"/>
</dbReference>
<dbReference type="SMR" id="A6V2W2"/>
<dbReference type="GeneID" id="77220376"/>
<dbReference type="KEGG" id="pap:PSPA7_2021"/>
<dbReference type="HOGENOM" id="CLU_015486_1_0_6"/>
<dbReference type="UniPathway" id="UPA00655">
    <property type="reaction ID" value="UER00711"/>
</dbReference>
<dbReference type="Proteomes" id="UP000001582">
    <property type="component" value="Chromosome"/>
</dbReference>
<dbReference type="GO" id="GO:0009329">
    <property type="term" value="C:acetate CoA-transferase complex"/>
    <property type="evidence" value="ECO:0007669"/>
    <property type="project" value="TreeGrafter"/>
</dbReference>
<dbReference type="GO" id="GO:0003989">
    <property type="term" value="F:acetyl-CoA carboxylase activity"/>
    <property type="evidence" value="ECO:0007669"/>
    <property type="project" value="InterPro"/>
</dbReference>
<dbReference type="GO" id="GO:0005524">
    <property type="term" value="F:ATP binding"/>
    <property type="evidence" value="ECO:0007669"/>
    <property type="project" value="UniProtKB-KW"/>
</dbReference>
<dbReference type="GO" id="GO:0016743">
    <property type="term" value="F:carboxyl- or carbamoyltransferase activity"/>
    <property type="evidence" value="ECO:0007669"/>
    <property type="project" value="UniProtKB-UniRule"/>
</dbReference>
<dbReference type="GO" id="GO:0008270">
    <property type="term" value="F:zinc ion binding"/>
    <property type="evidence" value="ECO:0007669"/>
    <property type="project" value="UniProtKB-UniRule"/>
</dbReference>
<dbReference type="GO" id="GO:0006633">
    <property type="term" value="P:fatty acid biosynthetic process"/>
    <property type="evidence" value="ECO:0007669"/>
    <property type="project" value="UniProtKB-KW"/>
</dbReference>
<dbReference type="GO" id="GO:2001295">
    <property type="term" value="P:malonyl-CoA biosynthetic process"/>
    <property type="evidence" value="ECO:0007669"/>
    <property type="project" value="UniProtKB-UniRule"/>
</dbReference>
<dbReference type="Gene3D" id="3.90.226.10">
    <property type="entry name" value="2-enoyl-CoA Hydratase, Chain A, domain 1"/>
    <property type="match status" value="1"/>
</dbReference>
<dbReference type="HAMAP" id="MF_01395">
    <property type="entry name" value="AcetylCoA_CT_beta"/>
    <property type="match status" value="1"/>
</dbReference>
<dbReference type="InterPro" id="IPR034733">
    <property type="entry name" value="AcCoA_carboxyl_beta"/>
</dbReference>
<dbReference type="InterPro" id="IPR000438">
    <property type="entry name" value="Acetyl_CoA_COase_Trfase_b_su"/>
</dbReference>
<dbReference type="InterPro" id="IPR029045">
    <property type="entry name" value="ClpP/crotonase-like_dom_sf"/>
</dbReference>
<dbReference type="InterPro" id="IPR011762">
    <property type="entry name" value="COA_CT_N"/>
</dbReference>
<dbReference type="InterPro" id="IPR041010">
    <property type="entry name" value="Znf-ACC"/>
</dbReference>
<dbReference type="NCBIfam" id="TIGR00515">
    <property type="entry name" value="accD"/>
    <property type="match status" value="1"/>
</dbReference>
<dbReference type="PANTHER" id="PTHR42995">
    <property type="entry name" value="ACETYL-COENZYME A CARBOXYLASE CARBOXYL TRANSFERASE SUBUNIT BETA, CHLOROPLASTIC"/>
    <property type="match status" value="1"/>
</dbReference>
<dbReference type="PANTHER" id="PTHR42995:SF5">
    <property type="entry name" value="ACETYL-COENZYME A CARBOXYLASE CARBOXYL TRANSFERASE SUBUNIT BETA, CHLOROPLASTIC"/>
    <property type="match status" value="1"/>
</dbReference>
<dbReference type="Pfam" id="PF01039">
    <property type="entry name" value="Carboxyl_trans"/>
    <property type="match status" value="1"/>
</dbReference>
<dbReference type="Pfam" id="PF17848">
    <property type="entry name" value="Zn_ribbon_ACC"/>
    <property type="match status" value="1"/>
</dbReference>
<dbReference type="PRINTS" id="PR01070">
    <property type="entry name" value="ACCCTRFRASEB"/>
</dbReference>
<dbReference type="SUPFAM" id="SSF52096">
    <property type="entry name" value="ClpP/crotonase"/>
    <property type="match status" value="1"/>
</dbReference>
<dbReference type="PROSITE" id="PS50980">
    <property type="entry name" value="COA_CT_NTER"/>
    <property type="match status" value="1"/>
</dbReference>
<proteinExistence type="inferred from homology"/>
<organism>
    <name type="scientific">Pseudomonas paraeruginosa (strain DSM 24068 / PA7)</name>
    <name type="common">Pseudomonas aeruginosa (strain PA7)</name>
    <dbReference type="NCBI Taxonomy" id="381754"/>
    <lineage>
        <taxon>Bacteria</taxon>
        <taxon>Pseudomonadati</taxon>
        <taxon>Pseudomonadota</taxon>
        <taxon>Gammaproteobacteria</taxon>
        <taxon>Pseudomonadales</taxon>
        <taxon>Pseudomonadaceae</taxon>
        <taxon>Pseudomonas</taxon>
        <taxon>Pseudomonas paraeruginosa</taxon>
    </lineage>
</organism>
<protein>
    <recommendedName>
        <fullName evidence="1">Acetyl-coenzyme A carboxylase carboxyl transferase subunit beta</fullName>
        <shortName evidence="1">ACCase subunit beta</shortName>
        <shortName evidence="1">Acetyl-CoA carboxylase carboxyltransferase subunit beta</shortName>
        <ecNumber evidence="1">2.1.3.15</ecNumber>
    </recommendedName>
</protein>
<feature type="chain" id="PRO_0000359034" description="Acetyl-coenzyme A carboxylase carboxyl transferase subunit beta">
    <location>
        <begin position="1"/>
        <end position="290"/>
    </location>
</feature>
<feature type="domain" description="CoA carboxyltransferase N-terminal" evidence="2">
    <location>
        <begin position="27"/>
        <end position="290"/>
    </location>
</feature>
<feature type="zinc finger region" description="C4-type" evidence="1">
    <location>
        <begin position="31"/>
        <end position="53"/>
    </location>
</feature>
<feature type="binding site" evidence="1">
    <location>
        <position position="31"/>
    </location>
    <ligand>
        <name>Zn(2+)</name>
        <dbReference type="ChEBI" id="CHEBI:29105"/>
    </ligand>
</feature>
<feature type="binding site" evidence="1">
    <location>
        <position position="34"/>
    </location>
    <ligand>
        <name>Zn(2+)</name>
        <dbReference type="ChEBI" id="CHEBI:29105"/>
    </ligand>
</feature>
<feature type="binding site" evidence="1">
    <location>
        <position position="50"/>
    </location>
    <ligand>
        <name>Zn(2+)</name>
        <dbReference type="ChEBI" id="CHEBI:29105"/>
    </ligand>
</feature>
<feature type="binding site" evidence="1">
    <location>
        <position position="53"/>
    </location>
    <ligand>
        <name>Zn(2+)</name>
        <dbReference type="ChEBI" id="CHEBI:29105"/>
    </ligand>
</feature>
<keyword id="KW-0067">ATP-binding</keyword>
<keyword id="KW-0963">Cytoplasm</keyword>
<keyword id="KW-0275">Fatty acid biosynthesis</keyword>
<keyword id="KW-0276">Fatty acid metabolism</keyword>
<keyword id="KW-0444">Lipid biosynthesis</keyword>
<keyword id="KW-0443">Lipid metabolism</keyword>
<keyword id="KW-0479">Metal-binding</keyword>
<keyword id="KW-0547">Nucleotide-binding</keyword>
<keyword id="KW-0808">Transferase</keyword>
<keyword id="KW-0862">Zinc</keyword>
<keyword id="KW-0863">Zinc-finger</keyword>
<accession>A6V2W2</accession>
<name>ACCD_PSEP7</name>
<evidence type="ECO:0000255" key="1">
    <source>
        <dbReference type="HAMAP-Rule" id="MF_01395"/>
    </source>
</evidence>
<evidence type="ECO:0000255" key="2">
    <source>
        <dbReference type="PROSITE-ProRule" id="PRU01136"/>
    </source>
</evidence>
<reference key="1">
    <citation type="submission" date="2007-06" db="EMBL/GenBank/DDBJ databases">
        <authorList>
            <person name="Dodson R.J."/>
            <person name="Harkins D."/>
            <person name="Paulsen I.T."/>
        </authorList>
    </citation>
    <scope>NUCLEOTIDE SEQUENCE [LARGE SCALE GENOMIC DNA]</scope>
    <source>
        <strain>DSM 24068 / PA7</strain>
    </source>
</reference>
<sequence length="290" mass="31902">MSNWLVDKLIPSIMRSESQKSSVPEGLWHKCPSCEAVLYRPELEKTLDVCPKCDHHMRINARTRLDIFLDEEGREELGADLEPVDRLKFRDSKKYKDRLSAAQKDTGEKDALIAMSGKLEGMPVVACAFEFSFMGGSMGAIVGERFVRAANVALEQRCPLICFSASGGARMQEALISLMQMAKTSAVLARLREEGIPFVSVLTDPVYGGVSASLAMLGDVIVGEPKALIGFAGPRVIEQTVREKLPEGFQRSEFLLEHGAIDMIVHRGELRPRLARLLSAFTHSPSPVSA</sequence>
<gene>
    <name evidence="1" type="primary">accD</name>
    <name type="ordered locus">PSPA7_2021</name>
</gene>